<dbReference type="EC" id="4.3.2.10" evidence="1"/>
<dbReference type="EMBL" id="AP009044">
    <property type="protein sequence ID" value="BAF54975.1"/>
    <property type="molecule type" value="Genomic_DNA"/>
</dbReference>
<dbReference type="RefSeq" id="WP_003856413.1">
    <property type="nucleotide sequence ID" value="NC_009342.1"/>
</dbReference>
<dbReference type="SMR" id="A4QFF9"/>
<dbReference type="GeneID" id="1020045"/>
<dbReference type="KEGG" id="cgt:cgR_1978"/>
<dbReference type="HOGENOM" id="CLU_048577_4_0_11"/>
<dbReference type="PhylomeDB" id="A4QFF9"/>
<dbReference type="UniPathway" id="UPA00031">
    <property type="reaction ID" value="UER00010"/>
</dbReference>
<dbReference type="Proteomes" id="UP000006698">
    <property type="component" value="Chromosome"/>
</dbReference>
<dbReference type="GO" id="GO:0005737">
    <property type="term" value="C:cytoplasm"/>
    <property type="evidence" value="ECO:0007669"/>
    <property type="project" value="UniProtKB-SubCell"/>
</dbReference>
<dbReference type="GO" id="GO:0000107">
    <property type="term" value="F:imidazoleglycerol-phosphate synthase activity"/>
    <property type="evidence" value="ECO:0007669"/>
    <property type="project" value="UniProtKB-UniRule"/>
</dbReference>
<dbReference type="GO" id="GO:0016829">
    <property type="term" value="F:lyase activity"/>
    <property type="evidence" value="ECO:0007669"/>
    <property type="project" value="UniProtKB-KW"/>
</dbReference>
<dbReference type="GO" id="GO:0000105">
    <property type="term" value="P:L-histidine biosynthetic process"/>
    <property type="evidence" value="ECO:0007669"/>
    <property type="project" value="UniProtKB-UniRule"/>
</dbReference>
<dbReference type="CDD" id="cd04731">
    <property type="entry name" value="HisF"/>
    <property type="match status" value="1"/>
</dbReference>
<dbReference type="FunFam" id="3.20.20.70:FF:000006">
    <property type="entry name" value="Imidazole glycerol phosphate synthase subunit HisF"/>
    <property type="match status" value="1"/>
</dbReference>
<dbReference type="Gene3D" id="3.20.20.70">
    <property type="entry name" value="Aldolase class I"/>
    <property type="match status" value="1"/>
</dbReference>
<dbReference type="HAMAP" id="MF_01013">
    <property type="entry name" value="HisF"/>
    <property type="match status" value="1"/>
</dbReference>
<dbReference type="InterPro" id="IPR013785">
    <property type="entry name" value="Aldolase_TIM"/>
</dbReference>
<dbReference type="InterPro" id="IPR006062">
    <property type="entry name" value="His_biosynth"/>
</dbReference>
<dbReference type="InterPro" id="IPR004651">
    <property type="entry name" value="HisF"/>
</dbReference>
<dbReference type="InterPro" id="IPR050064">
    <property type="entry name" value="IGPS_HisA/HisF"/>
</dbReference>
<dbReference type="InterPro" id="IPR011060">
    <property type="entry name" value="RibuloseP-bd_barrel"/>
</dbReference>
<dbReference type="NCBIfam" id="TIGR00735">
    <property type="entry name" value="hisF"/>
    <property type="match status" value="1"/>
</dbReference>
<dbReference type="PANTHER" id="PTHR21235:SF2">
    <property type="entry name" value="IMIDAZOLE GLYCEROL PHOSPHATE SYNTHASE HISHF"/>
    <property type="match status" value="1"/>
</dbReference>
<dbReference type="PANTHER" id="PTHR21235">
    <property type="entry name" value="IMIDAZOLE GLYCEROL PHOSPHATE SYNTHASE SUBUNIT HISF/H IGP SYNTHASE SUBUNIT HISF/H"/>
    <property type="match status" value="1"/>
</dbReference>
<dbReference type="Pfam" id="PF00977">
    <property type="entry name" value="His_biosynth"/>
    <property type="match status" value="1"/>
</dbReference>
<dbReference type="SUPFAM" id="SSF51366">
    <property type="entry name" value="Ribulose-phoshate binding barrel"/>
    <property type="match status" value="1"/>
</dbReference>
<gene>
    <name evidence="1" type="primary">hisF</name>
    <name type="ordered locus">cgR_1978</name>
</gene>
<organism>
    <name type="scientific">Corynebacterium glutamicum (strain R)</name>
    <dbReference type="NCBI Taxonomy" id="340322"/>
    <lineage>
        <taxon>Bacteria</taxon>
        <taxon>Bacillati</taxon>
        <taxon>Actinomycetota</taxon>
        <taxon>Actinomycetes</taxon>
        <taxon>Mycobacteriales</taxon>
        <taxon>Corynebacteriaceae</taxon>
        <taxon>Corynebacterium</taxon>
    </lineage>
</organism>
<evidence type="ECO:0000255" key="1">
    <source>
        <dbReference type="HAMAP-Rule" id="MF_01013"/>
    </source>
</evidence>
<comment type="function">
    <text evidence="1">IGPS catalyzes the conversion of PRFAR and glutamine to IGP, AICAR and glutamate. The HisF subunit catalyzes the cyclization activity that produces IGP and AICAR from PRFAR using the ammonia provided by the HisH subunit.</text>
</comment>
<comment type="catalytic activity">
    <reaction evidence="1">
        <text>5-[(5-phospho-1-deoxy-D-ribulos-1-ylimino)methylamino]-1-(5-phospho-beta-D-ribosyl)imidazole-4-carboxamide + L-glutamine = D-erythro-1-(imidazol-4-yl)glycerol 3-phosphate + 5-amino-1-(5-phospho-beta-D-ribosyl)imidazole-4-carboxamide + L-glutamate + H(+)</text>
        <dbReference type="Rhea" id="RHEA:24793"/>
        <dbReference type="ChEBI" id="CHEBI:15378"/>
        <dbReference type="ChEBI" id="CHEBI:29985"/>
        <dbReference type="ChEBI" id="CHEBI:58278"/>
        <dbReference type="ChEBI" id="CHEBI:58359"/>
        <dbReference type="ChEBI" id="CHEBI:58475"/>
        <dbReference type="ChEBI" id="CHEBI:58525"/>
        <dbReference type="EC" id="4.3.2.10"/>
    </reaction>
</comment>
<comment type="pathway">
    <text evidence="1">Amino-acid biosynthesis; L-histidine biosynthesis; L-histidine from 5-phospho-alpha-D-ribose 1-diphosphate: step 5/9.</text>
</comment>
<comment type="subunit">
    <text evidence="1">Heterodimer of HisH and HisF.</text>
</comment>
<comment type="subcellular location">
    <subcellularLocation>
        <location evidence="1">Cytoplasm</location>
    </subcellularLocation>
</comment>
<comment type="similarity">
    <text evidence="1">Belongs to the HisA/HisF family.</text>
</comment>
<protein>
    <recommendedName>
        <fullName evidence="1">Imidazole glycerol phosphate synthase subunit HisF</fullName>
        <ecNumber evidence="1">4.3.2.10</ecNumber>
    </recommendedName>
    <alternativeName>
        <fullName evidence="1">IGP synthase cyclase subunit</fullName>
    </alternativeName>
    <alternativeName>
        <fullName evidence="1">IGP synthase subunit HisF</fullName>
    </alternativeName>
    <alternativeName>
        <fullName evidence="1">ImGP synthase subunit HisF</fullName>
        <shortName evidence="1">IGPS subunit HisF</shortName>
    </alternativeName>
</protein>
<reference key="1">
    <citation type="journal article" date="2007" name="Microbiology">
        <title>Comparative analysis of the Corynebacterium glutamicum group and complete genome sequence of strain R.</title>
        <authorList>
            <person name="Yukawa H."/>
            <person name="Omumasaba C.A."/>
            <person name="Nonaka H."/>
            <person name="Kos P."/>
            <person name="Okai N."/>
            <person name="Suzuki N."/>
            <person name="Suda M."/>
            <person name="Tsuge Y."/>
            <person name="Watanabe J."/>
            <person name="Ikeda Y."/>
            <person name="Vertes A.A."/>
            <person name="Inui M."/>
        </authorList>
    </citation>
    <scope>NUCLEOTIDE SEQUENCE [LARGE SCALE GENOMIC DNA]</scope>
    <source>
        <strain>R</strain>
    </source>
</reference>
<name>HIS6_CORGB</name>
<proteinExistence type="inferred from homology"/>
<feature type="chain" id="PRO_1000063051" description="Imidazole glycerol phosphate synthase subunit HisF">
    <location>
        <begin position="1"/>
        <end position="258"/>
    </location>
</feature>
<feature type="active site" evidence="1">
    <location>
        <position position="12"/>
    </location>
</feature>
<feature type="active site" evidence="1">
    <location>
        <position position="131"/>
    </location>
</feature>
<sequence length="258" mass="27245">MGVAIRVIPCLDVDNGRVVKGVNFENLRDAGDPVELAKRYDEEGADELTFLDVTASKHGRGTMLDVVRRTADQVFIPLTVGGGVRSEEDVDQLLRAGADKVSVNTSAIARPELLSELSKRFGAQCIVLSVDARRVPEGGTPQPSGFEVTTHGGSKSAELDAIEWAKRGEELGVGEILLNSMDGDGTKNGFDLELLEKVRAAVSIPVIASGGAGKAEHFPPAVAAGANAVLAATIFHFREVTIAEVKGAIKDAGFEVRK</sequence>
<keyword id="KW-0028">Amino-acid biosynthesis</keyword>
<keyword id="KW-0963">Cytoplasm</keyword>
<keyword id="KW-0368">Histidine biosynthesis</keyword>
<keyword id="KW-0456">Lyase</keyword>
<accession>A4QFF9</accession>